<name>PNP_THEM4</name>
<evidence type="ECO:0000255" key="1">
    <source>
        <dbReference type="HAMAP-Rule" id="MF_01595"/>
    </source>
</evidence>
<comment type="function">
    <text evidence="1">Involved in mRNA degradation. Catalyzes the phosphorolysis of single-stranded polyribonucleotides processively in the 3'- to 5'-direction.</text>
</comment>
<comment type="catalytic activity">
    <reaction evidence="1">
        <text>RNA(n+1) + phosphate = RNA(n) + a ribonucleoside 5'-diphosphate</text>
        <dbReference type="Rhea" id="RHEA:22096"/>
        <dbReference type="Rhea" id="RHEA-COMP:14527"/>
        <dbReference type="Rhea" id="RHEA-COMP:17342"/>
        <dbReference type="ChEBI" id="CHEBI:43474"/>
        <dbReference type="ChEBI" id="CHEBI:57930"/>
        <dbReference type="ChEBI" id="CHEBI:140395"/>
        <dbReference type="EC" id="2.7.7.8"/>
    </reaction>
</comment>
<comment type="cofactor">
    <cofactor evidence="1">
        <name>Mg(2+)</name>
        <dbReference type="ChEBI" id="CHEBI:18420"/>
    </cofactor>
</comment>
<comment type="subcellular location">
    <subcellularLocation>
        <location evidence="1">Cytoplasm</location>
    </subcellularLocation>
</comment>
<comment type="similarity">
    <text evidence="1">Belongs to the polyribonucleotide nucleotidyltransferase family.</text>
</comment>
<organism>
    <name type="scientific">Thermosipho melanesiensis (strain DSM 12029 / CIP 104789 / BI429)</name>
    <dbReference type="NCBI Taxonomy" id="391009"/>
    <lineage>
        <taxon>Bacteria</taxon>
        <taxon>Thermotogati</taxon>
        <taxon>Thermotogota</taxon>
        <taxon>Thermotogae</taxon>
        <taxon>Thermotogales</taxon>
        <taxon>Fervidobacteriaceae</taxon>
        <taxon>Thermosipho</taxon>
    </lineage>
</organism>
<protein>
    <recommendedName>
        <fullName evidence="1">Polyribonucleotide nucleotidyltransferase</fullName>
        <ecNumber evidence="1">2.7.7.8</ecNumber>
    </recommendedName>
    <alternativeName>
        <fullName evidence="1">Polynucleotide phosphorylase</fullName>
        <shortName evidence="1">PNPase</shortName>
    </alternativeName>
</protein>
<proteinExistence type="inferred from homology"/>
<accession>A6LNF5</accession>
<dbReference type="EC" id="2.7.7.8" evidence="1"/>
<dbReference type="EMBL" id="CP000716">
    <property type="protein sequence ID" value="ABR31456.1"/>
    <property type="molecule type" value="Genomic_DNA"/>
</dbReference>
<dbReference type="SMR" id="A6LNF5"/>
<dbReference type="STRING" id="391009.Tmel_1612"/>
<dbReference type="KEGG" id="tme:Tmel_1612"/>
<dbReference type="eggNOG" id="COG1185">
    <property type="taxonomic scope" value="Bacteria"/>
</dbReference>
<dbReference type="HOGENOM" id="CLU_004217_2_2_0"/>
<dbReference type="Proteomes" id="UP000001110">
    <property type="component" value="Chromosome"/>
</dbReference>
<dbReference type="GO" id="GO:0005829">
    <property type="term" value="C:cytosol"/>
    <property type="evidence" value="ECO:0007669"/>
    <property type="project" value="TreeGrafter"/>
</dbReference>
<dbReference type="GO" id="GO:0000175">
    <property type="term" value="F:3'-5'-RNA exonuclease activity"/>
    <property type="evidence" value="ECO:0007669"/>
    <property type="project" value="TreeGrafter"/>
</dbReference>
<dbReference type="GO" id="GO:0000287">
    <property type="term" value="F:magnesium ion binding"/>
    <property type="evidence" value="ECO:0007669"/>
    <property type="project" value="UniProtKB-UniRule"/>
</dbReference>
<dbReference type="GO" id="GO:0004654">
    <property type="term" value="F:polyribonucleotide nucleotidyltransferase activity"/>
    <property type="evidence" value="ECO:0007669"/>
    <property type="project" value="UniProtKB-UniRule"/>
</dbReference>
<dbReference type="GO" id="GO:0003723">
    <property type="term" value="F:RNA binding"/>
    <property type="evidence" value="ECO:0007669"/>
    <property type="project" value="UniProtKB-UniRule"/>
</dbReference>
<dbReference type="GO" id="GO:0006402">
    <property type="term" value="P:mRNA catabolic process"/>
    <property type="evidence" value="ECO:0007669"/>
    <property type="project" value="UniProtKB-UniRule"/>
</dbReference>
<dbReference type="GO" id="GO:0006396">
    <property type="term" value="P:RNA processing"/>
    <property type="evidence" value="ECO:0007669"/>
    <property type="project" value="InterPro"/>
</dbReference>
<dbReference type="CDD" id="cd02393">
    <property type="entry name" value="KH-I_PNPase"/>
    <property type="match status" value="1"/>
</dbReference>
<dbReference type="CDD" id="cd11363">
    <property type="entry name" value="RNase_PH_PNPase_1"/>
    <property type="match status" value="1"/>
</dbReference>
<dbReference type="CDD" id="cd11364">
    <property type="entry name" value="RNase_PH_PNPase_2"/>
    <property type="match status" value="1"/>
</dbReference>
<dbReference type="FunFam" id="3.30.1370.10:FF:000001">
    <property type="entry name" value="Polyribonucleotide nucleotidyltransferase"/>
    <property type="match status" value="1"/>
</dbReference>
<dbReference type="FunFam" id="3.30.230.70:FF:000001">
    <property type="entry name" value="Polyribonucleotide nucleotidyltransferase"/>
    <property type="match status" value="1"/>
</dbReference>
<dbReference type="FunFam" id="3.30.230.70:FF:000002">
    <property type="entry name" value="Polyribonucleotide nucleotidyltransferase"/>
    <property type="match status" value="1"/>
</dbReference>
<dbReference type="Gene3D" id="3.30.230.70">
    <property type="entry name" value="GHMP Kinase, N-terminal domain"/>
    <property type="match status" value="2"/>
</dbReference>
<dbReference type="Gene3D" id="3.30.1370.10">
    <property type="entry name" value="K Homology domain, type 1"/>
    <property type="match status" value="1"/>
</dbReference>
<dbReference type="Gene3D" id="2.40.50.140">
    <property type="entry name" value="Nucleic acid-binding proteins"/>
    <property type="match status" value="1"/>
</dbReference>
<dbReference type="HAMAP" id="MF_01595">
    <property type="entry name" value="PNPase"/>
    <property type="match status" value="1"/>
</dbReference>
<dbReference type="InterPro" id="IPR001247">
    <property type="entry name" value="ExoRNase_PH_dom1"/>
</dbReference>
<dbReference type="InterPro" id="IPR015847">
    <property type="entry name" value="ExoRNase_PH_dom2"/>
</dbReference>
<dbReference type="InterPro" id="IPR036345">
    <property type="entry name" value="ExoRNase_PH_dom2_sf"/>
</dbReference>
<dbReference type="InterPro" id="IPR004087">
    <property type="entry name" value="KH_dom"/>
</dbReference>
<dbReference type="InterPro" id="IPR004088">
    <property type="entry name" value="KH_dom_type_1"/>
</dbReference>
<dbReference type="InterPro" id="IPR036612">
    <property type="entry name" value="KH_dom_type_1_sf"/>
</dbReference>
<dbReference type="InterPro" id="IPR012340">
    <property type="entry name" value="NA-bd_OB-fold"/>
</dbReference>
<dbReference type="InterPro" id="IPR012162">
    <property type="entry name" value="PNPase"/>
</dbReference>
<dbReference type="InterPro" id="IPR027408">
    <property type="entry name" value="PNPase/RNase_PH_dom_sf"/>
</dbReference>
<dbReference type="InterPro" id="IPR015848">
    <property type="entry name" value="PNPase_PH_RNA-bd_bac/org-type"/>
</dbReference>
<dbReference type="InterPro" id="IPR020568">
    <property type="entry name" value="Ribosomal_Su5_D2-typ_SF"/>
</dbReference>
<dbReference type="InterPro" id="IPR003029">
    <property type="entry name" value="S1_domain"/>
</dbReference>
<dbReference type="NCBIfam" id="TIGR03591">
    <property type="entry name" value="polynuc_phos"/>
    <property type="match status" value="1"/>
</dbReference>
<dbReference type="NCBIfam" id="NF008805">
    <property type="entry name" value="PRK11824.1"/>
    <property type="match status" value="1"/>
</dbReference>
<dbReference type="PANTHER" id="PTHR11252">
    <property type="entry name" value="POLYRIBONUCLEOTIDE NUCLEOTIDYLTRANSFERASE"/>
    <property type="match status" value="1"/>
</dbReference>
<dbReference type="PANTHER" id="PTHR11252:SF0">
    <property type="entry name" value="POLYRIBONUCLEOTIDE NUCLEOTIDYLTRANSFERASE 1, MITOCHONDRIAL"/>
    <property type="match status" value="1"/>
</dbReference>
<dbReference type="Pfam" id="PF00013">
    <property type="entry name" value="KH_1"/>
    <property type="match status" value="1"/>
</dbReference>
<dbReference type="Pfam" id="PF03726">
    <property type="entry name" value="PNPase"/>
    <property type="match status" value="1"/>
</dbReference>
<dbReference type="Pfam" id="PF01138">
    <property type="entry name" value="RNase_PH"/>
    <property type="match status" value="2"/>
</dbReference>
<dbReference type="Pfam" id="PF03725">
    <property type="entry name" value="RNase_PH_C"/>
    <property type="match status" value="2"/>
</dbReference>
<dbReference type="Pfam" id="PF00575">
    <property type="entry name" value="S1"/>
    <property type="match status" value="1"/>
</dbReference>
<dbReference type="PIRSF" id="PIRSF005499">
    <property type="entry name" value="PNPase"/>
    <property type="match status" value="1"/>
</dbReference>
<dbReference type="SMART" id="SM00322">
    <property type="entry name" value="KH"/>
    <property type="match status" value="1"/>
</dbReference>
<dbReference type="SMART" id="SM00316">
    <property type="entry name" value="S1"/>
    <property type="match status" value="1"/>
</dbReference>
<dbReference type="SUPFAM" id="SSF54791">
    <property type="entry name" value="Eukaryotic type KH-domain (KH-domain type I)"/>
    <property type="match status" value="1"/>
</dbReference>
<dbReference type="SUPFAM" id="SSF50249">
    <property type="entry name" value="Nucleic acid-binding proteins"/>
    <property type="match status" value="1"/>
</dbReference>
<dbReference type="SUPFAM" id="SSF55666">
    <property type="entry name" value="Ribonuclease PH domain 2-like"/>
    <property type="match status" value="2"/>
</dbReference>
<dbReference type="SUPFAM" id="SSF54211">
    <property type="entry name" value="Ribosomal protein S5 domain 2-like"/>
    <property type="match status" value="2"/>
</dbReference>
<dbReference type="PROSITE" id="PS50084">
    <property type="entry name" value="KH_TYPE_1"/>
    <property type="match status" value="1"/>
</dbReference>
<dbReference type="PROSITE" id="PS50126">
    <property type="entry name" value="S1"/>
    <property type="match status" value="1"/>
</dbReference>
<keyword id="KW-0963">Cytoplasm</keyword>
<keyword id="KW-0460">Magnesium</keyword>
<keyword id="KW-0479">Metal-binding</keyword>
<keyword id="KW-0548">Nucleotidyltransferase</keyword>
<keyword id="KW-0694">RNA-binding</keyword>
<keyword id="KW-0808">Transferase</keyword>
<reference key="1">
    <citation type="submission" date="2007-05" db="EMBL/GenBank/DDBJ databases">
        <title>Complete sequence of Thermosipho melanesiensis BI429.</title>
        <authorList>
            <consortium name="US DOE Joint Genome Institute"/>
            <person name="Copeland A."/>
            <person name="Lucas S."/>
            <person name="Lapidus A."/>
            <person name="Barry K."/>
            <person name="Glavina del Rio T."/>
            <person name="Dalin E."/>
            <person name="Tice H."/>
            <person name="Pitluck S."/>
            <person name="Chertkov O."/>
            <person name="Brettin T."/>
            <person name="Bruce D."/>
            <person name="Detter J.C."/>
            <person name="Han C."/>
            <person name="Schmutz J."/>
            <person name="Larimer F."/>
            <person name="Land M."/>
            <person name="Hauser L."/>
            <person name="Kyrpides N."/>
            <person name="Mikhailova N."/>
            <person name="Nelson K."/>
            <person name="Gogarten J.P."/>
            <person name="Noll K."/>
            <person name="Richardson P."/>
        </authorList>
    </citation>
    <scope>NUCLEOTIDE SEQUENCE [LARGE SCALE GENOMIC DNA]</scope>
    <source>
        <strain>DSM 12029 / CIP 104789 / BI429</strain>
    </source>
</reference>
<feature type="chain" id="PRO_0000329911" description="Polyribonucleotide nucleotidyltransferase">
    <location>
        <begin position="1"/>
        <end position="699"/>
    </location>
</feature>
<feature type="domain" description="KH" evidence="1">
    <location>
        <begin position="560"/>
        <end position="620"/>
    </location>
</feature>
<feature type="domain" description="S1 motif" evidence="1">
    <location>
        <begin position="630"/>
        <end position="697"/>
    </location>
</feature>
<feature type="binding site" evidence="1">
    <location>
        <position position="493"/>
    </location>
    <ligand>
        <name>Mg(2+)</name>
        <dbReference type="ChEBI" id="CHEBI:18420"/>
    </ligand>
</feature>
<feature type="binding site" evidence="1">
    <location>
        <position position="499"/>
    </location>
    <ligand>
        <name>Mg(2+)</name>
        <dbReference type="ChEBI" id="CHEBI:18420"/>
    </ligand>
</feature>
<gene>
    <name evidence="1" type="primary">pnp</name>
    <name type="ordered locus">Tmel_1612</name>
</gene>
<sequence length="699" mass="78031">MLKFREWSKEFFGRKLTIQYGKVAKQSSGAAWVQFGDSVVLATANISDRVIEGVDFVPLTVEYQEKFYAAGKIPGGFIKREGKPTESAILSARLIDRPIRPLFPKYLRNDVQLIVTVLSVDGDTPPDVTGIFAASLALNFSKIPFQGIVAGVRIGYVDGEFVIFPTEEQLKNSKLDIVVAGSKDAITMVEGEAKEVTEEEMVQALMVAHEAIKKLIEFEEEILREFNVEKMEIEEPKPKDELIGRFEELLVENELRKRLLIKEKLERSLKLKEYKEELISKIFEEFEIDDEEKLTQEMLLKELFDEKAKKLMRKIIINEGIRADGRTPEEIRPITCEVGVLPRTHGSALFTRGETQSLGIVTLGAPMEEQIVDTIMEEGTKRFILHYNFPPFSVGEVKPLRGPGRREIGHGHLAERALKAVAPDEEDFPYVVRVVSEILESNGSSSMATVCSGSLALMDAGVPIKTHVAGVAMGLIVDEENEVVLTDIQGLEDHWGDMDFKVAGTRNGITAFQMDCKIAGVGEELLKKALKQARVARMRILDIMFETIKEPRKSLSPYAPLIANIEIDPMKVGELIGPGGKVIKSIVKEFDVEISIDDVTGKVSVYGKDQNKVNQAIEYIKTLTREIEVGDMFEGKITRIEPYGLFVELMPGKIGLAHSSKLGNDSKEFRKKYKVGDVIKVVVVNIDDSGRIQLGKAEE</sequence>